<accession>Q6KI55</accession>
<proteinExistence type="inferred from homology"/>
<dbReference type="EMBL" id="AE017308">
    <property type="protein sequence ID" value="AAT27721.1"/>
    <property type="molecule type" value="Genomic_DNA"/>
</dbReference>
<dbReference type="RefSeq" id="WP_011264755.1">
    <property type="nucleotide sequence ID" value="NC_006908.1"/>
</dbReference>
<dbReference type="SMR" id="Q6KI55"/>
<dbReference type="STRING" id="267748.MMOB2350"/>
<dbReference type="KEGG" id="mmo:MMOB2350"/>
<dbReference type="eggNOG" id="COG0087">
    <property type="taxonomic scope" value="Bacteria"/>
</dbReference>
<dbReference type="HOGENOM" id="CLU_044142_4_0_14"/>
<dbReference type="OrthoDB" id="9806135at2"/>
<dbReference type="Proteomes" id="UP000009072">
    <property type="component" value="Chromosome"/>
</dbReference>
<dbReference type="GO" id="GO:0022625">
    <property type="term" value="C:cytosolic large ribosomal subunit"/>
    <property type="evidence" value="ECO:0007669"/>
    <property type="project" value="TreeGrafter"/>
</dbReference>
<dbReference type="GO" id="GO:0019843">
    <property type="term" value="F:rRNA binding"/>
    <property type="evidence" value="ECO:0007669"/>
    <property type="project" value="UniProtKB-UniRule"/>
</dbReference>
<dbReference type="GO" id="GO:0003735">
    <property type="term" value="F:structural constituent of ribosome"/>
    <property type="evidence" value="ECO:0007669"/>
    <property type="project" value="InterPro"/>
</dbReference>
<dbReference type="GO" id="GO:0006412">
    <property type="term" value="P:translation"/>
    <property type="evidence" value="ECO:0007669"/>
    <property type="project" value="UniProtKB-UniRule"/>
</dbReference>
<dbReference type="FunFam" id="2.40.30.10:FF:000004">
    <property type="entry name" value="50S ribosomal protein L3"/>
    <property type="match status" value="1"/>
</dbReference>
<dbReference type="Gene3D" id="3.30.160.810">
    <property type="match status" value="1"/>
</dbReference>
<dbReference type="Gene3D" id="2.40.30.10">
    <property type="entry name" value="Translation factors"/>
    <property type="match status" value="1"/>
</dbReference>
<dbReference type="HAMAP" id="MF_01325_B">
    <property type="entry name" value="Ribosomal_uL3_B"/>
    <property type="match status" value="1"/>
</dbReference>
<dbReference type="InterPro" id="IPR000597">
    <property type="entry name" value="Ribosomal_uL3"/>
</dbReference>
<dbReference type="InterPro" id="IPR019927">
    <property type="entry name" value="Ribosomal_uL3_bac/org-type"/>
</dbReference>
<dbReference type="InterPro" id="IPR019926">
    <property type="entry name" value="Ribosomal_uL3_CS"/>
</dbReference>
<dbReference type="InterPro" id="IPR009000">
    <property type="entry name" value="Transl_B-barrel_sf"/>
</dbReference>
<dbReference type="NCBIfam" id="TIGR03625">
    <property type="entry name" value="L3_bact"/>
    <property type="match status" value="1"/>
</dbReference>
<dbReference type="PANTHER" id="PTHR11229">
    <property type="entry name" value="50S RIBOSOMAL PROTEIN L3"/>
    <property type="match status" value="1"/>
</dbReference>
<dbReference type="PANTHER" id="PTHR11229:SF16">
    <property type="entry name" value="LARGE RIBOSOMAL SUBUNIT PROTEIN UL3C"/>
    <property type="match status" value="1"/>
</dbReference>
<dbReference type="Pfam" id="PF00297">
    <property type="entry name" value="Ribosomal_L3"/>
    <property type="match status" value="1"/>
</dbReference>
<dbReference type="SUPFAM" id="SSF50447">
    <property type="entry name" value="Translation proteins"/>
    <property type="match status" value="1"/>
</dbReference>
<dbReference type="PROSITE" id="PS00474">
    <property type="entry name" value="RIBOSOMAL_L3"/>
    <property type="match status" value="1"/>
</dbReference>
<sequence length="297" mass="32704">MKGILGQKIGMTQIYTAQGNKVPVTVIEVKPNVVTHKFENTKDGYVALQLGAFDQKERKFKKPEIGHFKKSNTTPKRFVKEIRNMDGYNLGDLVKADIFKSGELVDVTGISKGKGFAGTIKRHNQKIGPKSHGGGGGSKPVRQTGSIGDIAGNKVLKGMTMPGHLGNVQRTIQNLEVVKVDIKNNILLVKGSVPGPKNCFLIIKSAIKNLPSREAIELVNIKEAILKNQLLESAKKYGAEVSVDMKIHEMEEIIHAAMKEKEKLEQEAKQNAEKSNSDDDVRKEAEKLNKNKEDKGE</sequence>
<keyword id="KW-1185">Reference proteome</keyword>
<keyword id="KW-0687">Ribonucleoprotein</keyword>
<keyword id="KW-0689">Ribosomal protein</keyword>
<keyword id="KW-0694">RNA-binding</keyword>
<keyword id="KW-0699">rRNA-binding</keyword>
<evidence type="ECO:0000255" key="1">
    <source>
        <dbReference type="HAMAP-Rule" id="MF_01325"/>
    </source>
</evidence>
<evidence type="ECO:0000256" key="2">
    <source>
        <dbReference type="SAM" id="MobiDB-lite"/>
    </source>
</evidence>
<evidence type="ECO:0000305" key="3"/>
<reference key="1">
    <citation type="journal article" date="2004" name="Genome Res.">
        <title>The complete genome and proteome of Mycoplasma mobile.</title>
        <authorList>
            <person name="Jaffe J.D."/>
            <person name="Stange-Thomann N."/>
            <person name="Smith C."/>
            <person name="DeCaprio D."/>
            <person name="Fisher S."/>
            <person name="Butler J."/>
            <person name="Calvo S."/>
            <person name="Elkins T."/>
            <person name="FitzGerald M.G."/>
            <person name="Hafez N."/>
            <person name="Kodira C.D."/>
            <person name="Major J."/>
            <person name="Wang S."/>
            <person name="Wilkinson J."/>
            <person name="Nicol R."/>
            <person name="Nusbaum C."/>
            <person name="Birren B."/>
            <person name="Berg H.C."/>
            <person name="Church G.M."/>
        </authorList>
    </citation>
    <scope>NUCLEOTIDE SEQUENCE [LARGE SCALE GENOMIC DNA]</scope>
    <source>
        <strain>ATCC 43663 / NCTC 11711 / 163 K</strain>
    </source>
</reference>
<comment type="function">
    <text evidence="1">One of the primary rRNA binding proteins, it binds directly near the 3'-end of the 23S rRNA, where it nucleates assembly of the 50S subunit.</text>
</comment>
<comment type="subunit">
    <text evidence="1">Part of the 50S ribosomal subunit. Forms a cluster with proteins L14 and L19.</text>
</comment>
<comment type="similarity">
    <text evidence="1">Belongs to the universal ribosomal protein uL3 family.</text>
</comment>
<gene>
    <name evidence="1" type="primary">rplC</name>
    <name type="ordered locus">MMOB2350</name>
</gene>
<protein>
    <recommendedName>
        <fullName evidence="1">Large ribosomal subunit protein uL3</fullName>
    </recommendedName>
    <alternativeName>
        <fullName evidence="3">50S ribosomal protein L3</fullName>
    </alternativeName>
</protein>
<name>RL3_MYCM1</name>
<feature type="chain" id="PRO_0000241371" description="Large ribosomal subunit protein uL3">
    <location>
        <begin position="1"/>
        <end position="297"/>
    </location>
</feature>
<feature type="region of interest" description="Disordered" evidence="2">
    <location>
        <begin position="124"/>
        <end position="143"/>
    </location>
</feature>
<feature type="region of interest" description="Disordered" evidence="2">
    <location>
        <begin position="258"/>
        <end position="297"/>
    </location>
</feature>
<organism>
    <name type="scientific">Mycoplasma mobile (strain ATCC 43663 / 163K / NCTC 11711)</name>
    <name type="common">Mesomycoplasma mobile</name>
    <dbReference type="NCBI Taxonomy" id="267748"/>
    <lineage>
        <taxon>Bacteria</taxon>
        <taxon>Bacillati</taxon>
        <taxon>Mycoplasmatota</taxon>
        <taxon>Mycoplasmoidales</taxon>
        <taxon>Metamycoplasmataceae</taxon>
        <taxon>Mesomycoplasma</taxon>
    </lineage>
</organism>